<comment type="function">
    <text evidence="1">Together with the chaperonin GroEL, plays an essential role in assisting protein folding. The GroEL-GroES system forms a nano-cage that allows encapsulation of the non-native substrate proteins and provides a physical environment optimized to promote and accelerate protein folding. GroES binds to the apical surface of the GroEL ring, thereby capping the opening of the GroEL channel.</text>
</comment>
<comment type="subunit">
    <text evidence="1">Heptamer of 7 subunits arranged in a ring. Interacts with the chaperonin GroEL.</text>
</comment>
<comment type="subcellular location">
    <subcellularLocation>
        <location evidence="1">Cytoplasm</location>
    </subcellularLocation>
</comment>
<comment type="similarity">
    <text evidence="1">Belongs to the GroES chaperonin family.</text>
</comment>
<accession>A1BHS6</accession>
<dbReference type="EMBL" id="CP000492">
    <property type="protein sequence ID" value="ABL65953.1"/>
    <property type="molecule type" value="Genomic_DNA"/>
</dbReference>
<dbReference type="RefSeq" id="WP_011745759.1">
    <property type="nucleotide sequence ID" value="NC_008639.1"/>
</dbReference>
<dbReference type="SMR" id="A1BHS6"/>
<dbReference type="STRING" id="290317.Cpha266_1937"/>
<dbReference type="KEGG" id="cph:Cpha266_1937"/>
<dbReference type="eggNOG" id="COG0234">
    <property type="taxonomic scope" value="Bacteria"/>
</dbReference>
<dbReference type="HOGENOM" id="CLU_132825_2_0_10"/>
<dbReference type="OrthoDB" id="9806791at2"/>
<dbReference type="Proteomes" id="UP000008701">
    <property type="component" value="Chromosome"/>
</dbReference>
<dbReference type="GO" id="GO:0005737">
    <property type="term" value="C:cytoplasm"/>
    <property type="evidence" value="ECO:0007669"/>
    <property type="project" value="UniProtKB-SubCell"/>
</dbReference>
<dbReference type="GO" id="GO:0005524">
    <property type="term" value="F:ATP binding"/>
    <property type="evidence" value="ECO:0007669"/>
    <property type="project" value="InterPro"/>
</dbReference>
<dbReference type="GO" id="GO:0046872">
    <property type="term" value="F:metal ion binding"/>
    <property type="evidence" value="ECO:0007669"/>
    <property type="project" value="TreeGrafter"/>
</dbReference>
<dbReference type="GO" id="GO:0044183">
    <property type="term" value="F:protein folding chaperone"/>
    <property type="evidence" value="ECO:0007669"/>
    <property type="project" value="InterPro"/>
</dbReference>
<dbReference type="GO" id="GO:0051087">
    <property type="term" value="F:protein-folding chaperone binding"/>
    <property type="evidence" value="ECO:0007669"/>
    <property type="project" value="TreeGrafter"/>
</dbReference>
<dbReference type="GO" id="GO:0051082">
    <property type="term" value="F:unfolded protein binding"/>
    <property type="evidence" value="ECO:0007669"/>
    <property type="project" value="TreeGrafter"/>
</dbReference>
<dbReference type="GO" id="GO:0051085">
    <property type="term" value="P:chaperone cofactor-dependent protein refolding"/>
    <property type="evidence" value="ECO:0007669"/>
    <property type="project" value="TreeGrafter"/>
</dbReference>
<dbReference type="CDD" id="cd00320">
    <property type="entry name" value="cpn10"/>
    <property type="match status" value="1"/>
</dbReference>
<dbReference type="FunFam" id="2.30.33.40:FF:000001">
    <property type="entry name" value="10 kDa chaperonin"/>
    <property type="match status" value="1"/>
</dbReference>
<dbReference type="Gene3D" id="2.30.33.40">
    <property type="entry name" value="GroES chaperonin"/>
    <property type="match status" value="1"/>
</dbReference>
<dbReference type="HAMAP" id="MF_00580">
    <property type="entry name" value="CH10"/>
    <property type="match status" value="1"/>
</dbReference>
<dbReference type="InterPro" id="IPR020818">
    <property type="entry name" value="Chaperonin_GroES"/>
</dbReference>
<dbReference type="InterPro" id="IPR037124">
    <property type="entry name" value="Chaperonin_GroES_sf"/>
</dbReference>
<dbReference type="InterPro" id="IPR018369">
    <property type="entry name" value="Chaprnonin_Cpn10_CS"/>
</dbReference>
<dbReference type="InterPro" id="IPR011032">
    <property type="entry name" value="GroES-like_sf"/>
</dbReference>
<dbReference type="NCBIfam" id="NF001527">
    <property type="entry name" value="PRK00364.1-2"/>
    <property type="match status" value="1"/>
</dbReference>
<dbReference type="NCBIfam" id="NF001529">
    <property type="entry name" value="PRK00364.1-5"/>
    <property type="match status" value="1"/>
</dbReference>
<dbReference type="NCBIfam" id="NF001531">
    <property type="entry name" value="PRK00364.2-2"/>
    <property type="match status" value="1"/>
</dbReference>
<dbReference type="NCBIfam" id="NF001533">
    <property type="entry name" value="PRK00364.2-4"/>
    <property type="match status" value="1"/>
</dbReference>
<dbReference type="NCBIfam" id="NF001534">
    <property type="entry name" value="PRK00364.2-5"/>
    <property type="match status" value="1"/>
</dbReference>
<dbReference type="PANTHER" id="PTHR10772">
    <property type="entry name" value="10 KDA HEAT SHOCK PROTEIN"/>
    <property type="match status" value="1"/>
</dbReference>
<dbReference type="PANTHER" id="PTHR10772:SF58">
    <property type="entry name" value="CO-CHAPERONIN GROES"/>
    <property type="match status" value="1"/>
</dbReference>
<dbReference type="Pfam" id="PF00166">
    <property type="entry name" value="Cpn10"/>
    <property type="match status" value="1"/>
</dbReference>
<dbReference type="PRINTS" id="PR00297">
    <property type="entry name" value="CHAPERONIN10"/>
</dbReference>
<dbReference type="SMART" id="SM00883">
    <property type="entry name" value="Cpn10"/>
    <property type="match status" value="1"/>
</dbReference>
<dbReference type="SUPFAM" id="SSF50129">
    <property type="entry name" value="GroES-like"/>
    <property type="match status" value="1"/>
</dbReference>
<dbReference type="PROSITE" id="PS00681">
    <property type="entry name" value="CHAPERONINS_CPN10"/>
    <property type="match status" value="1"/>
</dbReference>
<name>CH10_CHLPD</name>
<reference key="1">
    <citation type="submission" date="2006-12" db="EMBL/GenBank/DDBJ databases">
        <title>Complete sequence of Chlorobium phaeobacteroides DSM 266.</title>
        <authorList>
            <consortium name="US DOE Joint Genome Institute"/>
            <person name="Copeland A."/>
            <person name="Lucas S."/>
            <person name="Lapidus A."/>
            <person name="Barry K."/>
            <person name="Detter J.C."/>
            <person name="Glavina del Rio T."/>
            <person name="Hammon N."/>
            <person name="Israni S."/>
            <person name="Pitluck S."/>
            <person name="Goltsman E."/>
            <person name="Schmutz J."/>
            <person name="Larimer F."/>
            <person name="Land M."/>
            <person name="Hauser L."/>
            <person name="Mikhailova N."/>
            <person name="Li T."/>
            <person name="Overmann J."/>
            <person name="Bryant D.A."/>
            <person name="Richardson P."/>
        </authorList>
    </citation>
    <scope>NUCLEOTIDE SEQUENCE [LARGE SCALE GENOMIC DNA]</scope>
    <source>
        <strain>DSM 266 / SMG 266 / 2430</strain>
    </source>
</reference>
<evidence type="ECO:0000255" key="1">
    <source>
        <dbReference type="HAMAP-Rule" id="MF_00580"/>
    </source>
</evidence>
<sequence>MNLKPLADRVIVKPAPAEEKTKGGLIIPDTGKEKPQYGEVVAVGTGKVADSGQLLEMQIKVGQKVLYGKYSGTEVSVEGEDYLIMRESDIFAILD</sequence>
<proteinExistence type="inferred from homology"/>
<feature type="chain" id="PRO_1000025233" description="Co-chaperonin GroES">
    <location>
        <begin position="1"/>
        <end position="95"/>
    </location>
</feature>
<gene>
    <name evidence="1" type="primary">groES</name>
    <name evidence="1" type="synonym">groS</name>
    <name type="ordered locus">Cpha266_1937</name>
</gene>
<organism>
    <name type="scientific">Chlorobium phaeobacteroides (strain DSM 266 / SMG 266 / 2430)</name>
    <dbReference type="NCBI Taxonomy" id="290317"/>
    <lineage>
        <taxon>Bacteria</taxon>
        <taxon>Pseudomonadati</taxon>
        <taxon>Chlorobiota</taxon>
        <taxon>Chlorobiia</taxon>
        <taxon>Chlorobiales</taxon>
        <taxon>Chlorobiaceae</taxon>
        <taxon>Chlorobium/Pelodictyon group</taxon>
        <taxon>Chlorobium</taxon>
    </lineage>
</organism>
<protein>
    <recommendedName>
        <fullName evidence="1">Co-chaperonin GroES</fullName>
    </recommendedName>
    <alternativeName>
        <fullName evidence="1">10 kDa chaperonin</fullName>
    </alternativeName>
    <alternativeName>
        <fullName evidence="1">Chaperonin-10</fullName>
        <shortName evidence="1">Cpn10</shortName>
    </alternativeName>
</protein>
<keyword id="KW-0143">Chaperone</keyword>
<keyword id="KW-0963">Cytoplasm</keyword>
<keyword id="KW-1185">Reference proteome</keyword>